<gene>
    <name type="primary">exgA</name>
    <name type="synonym">exg1</name>
    <name type="ORF">AFUA_1G03600</name>
</gene>
<feature type="signal peptide" evidence="2">
    <location>
        <begin position="1"/>
        <end position="22"/>
    </location>
</feature>
<feature type="chain" id="PRO_0000393530" description="Probable glucan 1,3-beta-glucosidase A">
    <location>
        <begin position="23"/>
        <end position="416"/>
    </location>
</feature>
<feature type="active site" description="Proton donor" evidence="1">
    <location>
        <position position="211"/>
    </location>
</feature>
<feature type="active site" description="Nucleophile" evidence="1">
    <location>
        <position position="308"/>
    </location>
</feature>
<feature type="glycosylation site" description="N-linked (GlcNAc...) asparagine" evidence="2">
    <location>
        <position position="344"/>
    </location>
</feature>
<feature type="disulfide bond" evidence="1">
    <location>
        <begin position="291"/>
        <end position="415"/>
    </location>
</feature>
<feature type="disulfide bond" evidence="1">
    <location>
        <begin position="316"/>
        <end position="342"/>
    </location>
</feature>
<comment type="function">
    <text evidence="1">Beta-glucanases participate in the metabolism of beta-glucan, the main structural component of the cell wall. It could also function biosynthetically as a transglycosylase (By similarity).</text>
</comment>
<comment type="catalytic activity">
    <reaction>
        <text>Successive hydrolysis of beta-D-glucose units from the non-reducing ends of (1-&gt;3)-beta-D-glucans, releasing alpha-glucose.</text>
        <dbReference type="EC" id="3.2.1.58"/>
    </reaction>
</comment>
<comment type="cofactor">
    <cofactor evidence="1">
        <name>Mn(2+)</name>
        <dbReference type="ChEBI" id="CHEBI:29035"/>
    </cofactor>
</comment>
<comment type="subunit">
    <text evidence="1">Monomer.</text>
</comment>
<comment type="subcellular location">
    <subcellularLocation>
        <location evidence="1">Secreted</location>
    </subcellularLocation>
</comment>
<comment type="similarity">
    <text evidence="3">Belongs to the glycosyl hydrolase 5 (cellulase A) family.</text>
</comment>
<organism>
    <name type="scientific">Aspergillus fumigatus (strain ATCC MYA-4609 / CBS 101355 / FGSC A1100 / Af293)</name>
    <name type="common">Neosartorya fumigata</name>
    <dbReference type="NCBI Taxonomy" id="330879"/>
    <lineage>
        <taxon>Eukaryota</taxon>
        <taxon>Fungi</taxon>
        <taxon>Dikarya</taxon>
        <taxon>Ascomycota</taxon>
        <taxon>Pezizomycotina</taxon>
        <taxon>Eurotiomycetes</taxon>
        <taxon>Eurotiomycetidae</taxon>
        <taxon>Eurotiales</taxon>
        <taxon>Aspergillaceae</taxon>
        <taxon>Aspergillus</taxon>
        <taxon>Aspergillus subgen. Fumigati</taxon>
    </lineage>
</organism>
<accession>Q4WK60</accession>
<proteinExistence type="inferred from homology"/>
<dbReference type="EC" id="3.2.1.58"/>
<dbReference type="EMBL" id="AAHF01000007">
    <property type="protein sequence ID" value="EAL88072.1"/>
    <property type="molecule type" value="Genomic_DNA"/>
</dbReference>
<dbReference type="RefSeq" id="XP_750110.1">
    <property type="nucleotide sequence ID" value="XM_745017.1"/>
</dbReference>
<dbReference type="SMR" id="Q4WK60"/>
<dbReference type="FunCoup" id="Q4WK60">
    <property type="interactions" value="130"/>
</dbReference>
<dbReference type="STRING" id="330879.Q4WK60"/>
<dbReference type="CAZy" id="GH5">
    <property type="family name" value="Glycoside Hydrolase Family 5"/>
</dbReference>
<dbReference type="GlyCosmos" id="Q4WK60">
    <property type="glycosylation" value="1 site, No reported glycans"/>
</dbReference>
<dbReference type="EnsemblFungi" id="EAL88072">
    <property type="protein sequence ID" value="EAL88072"/>
    <property type="gene ID" value="AFUA_1G03600"/>
</dbReference>
<dbReference type="GeneID" id="3507984"/>
<dbReference type="KEGG" id="afm:AFUA_1G03600"/>
<dbReference type="VEuPathDB" id="FungiDB:Afu1g03600"/>
<dbReference type="eggNOG" id="ENOG502QPYU">
    <property type="taxonomic scope" value="Eukaryota"/>
</dbReference>
<dbReference type="HOGENOM" id="CLU_004624_0_1_1"/>
<dbReference type="InParanoid" id="Q4WK60"/>
<dbReference type="OMA" id="GWDMQDL"/>
<dbReference type="OrthoDB" id="62120at2759"/>
<dbReference type="Proteomes" id="UP000002530">
    <property type="component" value="Chromosome 1"/>
</dbReference>
<dbReference type="GO" id="GO:0005576">
    <property type="term" value="C:extracellular region"/>
    <property type="evidence" value="ECO:0000318"/>
    <property type="project" value="GO_Central"/>
</dbReference>
<dbReference type="GO" id="GO:0004338">
    <property type="term" value="F:glucan exo-1,3-beta-glucosidase activity"/>
    <property type="evidence" value="ECO:0000318"/>
    <property type="project" value="GO_Central"/>
</dbReference>
<dbReference type="GO" id="GO:0046872">
    <property type="term" value="F:metal ion binding"/>
    <property type="evidence" value="ECO:0007669"/>
    <property type="project" value="UniProtKB-KW"/>
</dbReference>
<dbReference type="GO" id="GO:0071555">
    <property type="term" value="P:cell wall organization"/>
    <property type="evidence" value="ECO:0007669"/>
    <property type="project" value="UniProtKB-KW"/>
</dbReference>
<dbReference type="GO" id="GO:0009251">
    <property type="term" value="P:glucan catabolic process"/>
    <property type="evidence" value="ECO:0000318"/>
    <property type="project" value="GO_Central"/>
</dbReference>
<dbReference type="FunFam" id="3.20.20.80:FF:000033">
    <property type="entry name" value="Glucan 1,3-beta-glucosidase A"/>
    <property type="match status" value="1"/>
</dbReference>
<dbReference type="Gene3D" id="3.20.20.80">
    <property type="entry name" value="Glycosidases"/>
    <property type="match status" value="1"/>
</dbReference>
<dbReference type="InterPro" id="IPR001547">
    <property type="entry name" value="Glyco_hydro_5"/>
</dbReference>
<dbReference type="InterPro" id="IPR017853">
    <property type="entry name" value="Glycoside_hydrolase_SF"/>
</dbReference>
<dbReference type="InterPro" id="IPR050386">
    <property type="entry name" value="Glycosyl_hydrolase_5"/>
</dbReference>
<dbReference type="PANTHER" id="PTHR31297:SF1">
    <property type="entry name" value="GLUCAN 1,3-BETA-GLUCOSIDASE I_II-RELATED"/>
    <property type="match status" value="1"/>
</dbReference>
<dbReference type="PANTHER" id="PTHR31297">
    <property type="entry name" value="GLUCAN ENDO-1,6-BETA-GLUCOSIDASE B"/>
    <property type="match status" value="1"/>
</dbReference>
<dbReference type="Pfam" id="PF00150">
    <property type="entry name" value="Cellulase"/>
    <property type="match status" value="1"/>
</dbReference>
<dbReference type="SUPFAM" id="SSF51445">
    <property type="entry name" value="(Trans)glycosidases"/>
    <property type="match status" value="1"/>
</dbReference>
<protein>
    <recommendedName>
        <fullName>Probable glucan 1,3-beta-glucosidase A</fullName>
        <ecNumber>3.2.1.58</ecNumber>
    </recommendedName>
    <alternativeName>
        <fullName>Exo-1,3-beta-glucanase 1</fullName>
    </alternativeName>
    <alternativeName>
        <fullName>Exo-1,3-beta-glucanase A</fullName>
    </alternativeName>
</protein>
<evidence type="ECO:0000250" key="1"/>
<evidence type="ECO:0000255" key="2"/>
<evidence type="ECO:0000305" key="3"/>
<reference key="1">
    <citation type="journal article" date="2005" name="Nature">
        <title>Genomic sequence of the pathogenic and allergenic filamentous fungus Aspergillus fumigatus.</title>
        <authorList>
            <person name="Nierman W.C."/>
            <person name="Pain A."/>
            <person name="Anderson M.J."/>
            <person name="Wortman J.R."/>
            <person name="Kim H.S."/>
            <person name="Arroyo J."/>
            <person name="Berriman M."/>
            <person name="Abe K."/>
            <person name="Archer D.B."/>
            <person name="Bermejo C."/>
            <person name="Bennett J.W."/>
            <person name="Bowyer P."/>
            <person name="Chen D."/>
            <person name="Collins M."/>
            <person name="Coulsen R."/>
            <person name="Davies R."/>
            <person name="Dyer P.S."/>
            <person name="Farman M.L."/>
            <person name="Fedorova N."/>
            <person name="Fedorova N.D."/>
            <person name="Feldblyum T.V."/>
            <person name="Fischer R."/>
            <person name="Fosker N."/>
            <person name="Fraser A."/>
            <person name="Garcia J.L."/>
            <person name="Garcia M.J."/>
            <person name="Goble A."/>
            <person name="Goldman G.H."/>
            <person name="Gomi K."/>
            <person name="Griffith-Jones S."/>
            <person name="Gwilliam R."/>
            <person name="Haas B.J."/>
            <person name="Haas H."/>
            <person name="Harris D.E."/>
            <person name="Horiuchi H."/>
            <person name="Huang J."/>
            <person name="Humphray S."/>
            <person name="Jimenez J."/>
            <person name="Keller N."/>
            <person name="Khouri H."/>
            <person name="Kitamoto K."/>
            <person name="Kobayashi T."/>
            <person name="Konzack S."/>
            <person name="Kulkarni R."/>
            <person name="Kumagai T."/>
            <person name="Lafton A."/>
            <person name="Latge J.-P."/>
            <person name="Li W."/>
            <person name="Lord A."/>
            <person name="Lu C."/>
            <person name="Majoros W.H."/>
            <person name="May G.S."/>
            <person name="Miller B.L."/>
            <person name="Mohamoud Y."/>
            <person name="Molina M."/>
            <person name="Monod M."/>
            <person name="Mouyna I."/>
            <person name="Mulligan S."/>
            <person name="Murphy L.D."/>
            <person name="O'Neil S."/>
            <person name="Paulsen I."/>
            <person name="Penalva M.A."/>
            <person name="Pertea M."/>
            <person name="Price C."/>
            <person name="Pritchard B.L."/>
            <person name="Quail M.A."/>
            <person name="Rabbinowitsch E."/>
            <person name="Rawlins N."/>
            <person name="Rajandream M.A."/>
            <person name="Reichard U."/>
            <person name="Renauld H."/>
            <person name="Robson G.D."/>
            <person name="Rodriguez de Cordoba S."/>
            <person name="Rodriguez-Pena J.M."/>
            <person name="Ronning C.M."/>
            <person name="Rutter S."/>
            <person name="Salzberg S.L."/>
            <person name="Sanchez M."/>
            <person name="Sanchez-Ferrero J.C."/>
            <person name="Saunders D."/>
            <person name="Seeger K."/>
            <person name="Squares R."/>
            <person name="Squares S."/>
            <person name="Takeuchi M."/>
            <person name="Tekaia F."/>
            <person name="Turner G."/>
            <person name="Vazquez de Aldana C.R."/>
            <person name="Weidman J."/>
            <person name="White O."/>
            <person name="Woodward J.R."/>
            <person name="Yu J.-H."/>
            <person name="Fraser C.M."/>
            <person name="Galagan J.E."/>
            <person name="Asai K."/>
            <person name="Machida M."/>
            <person name="Hall N."/>
            <person name="Barrell B.G."/>
            <person name="Denning D.W."/>
        </authorList>
    </citation>
    <scope>NUCLEOTIDE SEQUENCE [LARGE SCALE GENOMIC DNA]</scope>
    <source>
        <strain>ATCC MYA-4609 / CBS 101355 / FGSC A1100 / Af293</strain>
    </source>
</reference>
<keyword id="KW-0119">Carbohydrate metabolism</keyword>
<keyword id="KW-0961">Cell wall biogenesis/degradation</keyword>
<keyword id="KW-1015">Disulfide bond</keyword>
<keyword id="KW-0325">Glycoprotein</keyword>
<keyword id="KW-0326">Glycosidase</keyword>
<keyword id="KW-0378">Hydrolase</keyword>
<keyword id="KW-0464">Manganese</keyword>
<keyword id="KW-0479">Metal-binding</keyword>
<keyword id="KW-0624">Polysaccharide degradation</keyword>
<keyword id="KW-1185">Reference proteome</keyword>
<keyword id="KW-0964">Secreted</keyword>
<keyword id="KW-0732">Signal</keyword>
<name>EXGA_ASPFU</name>
<sequence length="416" mass="45687">MIFKFSQKALVALYLVVGLAEAVPSKSRVVSRASTFDYNGIVRGVNIGGWLVLEPWITPSIFDNAGDAAVDEWTLTATLGQDQAKAVLSQHWSTFITQDDFQQIAQAGMNHVRIPIGYWAVSSLPDEPYVDGQLEYLDNAISWAREAGLKVVIDLHGAPGSQNGFDNSGRKGPIAWQQGDTVSQTVDAFRALAERYLPQSDVVTAIEALNEPNIPGGVSEAGLRDYYNQIADVVRQIDPGTSVFLSDGFLSTESWNGFKTGEDVVMDTHHYEMFDNYLISLDIDGHVKSACDFGKQIEGSDKPVVVGEWSGAVTDCTKHLNGKGVSTRYQGEYANNVKYGDCANTTQGSVADLSDQERTDTRRFIEAQLDAYEGKNGWLFWTWKTEGAPGWDMQDLLANGVFPSPLTDRQFPNQCA</sequence>